<organismHost>
    <name type="scientific">Homo sapiens</name>
    <name type="common">Human</name>
    <dbReference type="NCBI Taxonomy" id="9606"/>
</organismHost>
<proteinExistence type="predicted"/>
<gene>
    <name type="ORF">EC-RF4</name>
</gene>
<dbReference type="EMBL" id="V01555">
    <property type="status" value="NOT_ANNOTATED_CDS"/>
    <property type="molecule type" value="Genomic_DNA"/>
</dbReference>
<dbReference type="PIR" id="A03799">
    <property type="entry name" value="QQBE4R"/>
</dbReference>
<organism>
    <name type="scientific">Epstein-Barr virus (strain B95-8)</name>
    <name type="common">HHV-4</name>
    <name type="synonym">Human herpesvirus 4</name>
    <dbReference type="NCBI Taxonomy" id="10377"/>
    <lineage>
        <taxon>Viruses</taxon>
        <taxon>Duplodnaviria</taxon>
        <taxon>Heunggongvirae</taxon>
        <taxon>Peploviricota</taxon>
        <taxon>Herviviricetes</taxon>
        <taxon>Herpesvirales</taxon>
        <taxon>Orthoherpesviridae</taxon>
        <taxon>Gammaherpesvirinae</taxon>
        <taxon>Lymphocryptovirus</taxon>
        <taxon>Lymphocryptovirus humangamma4</taxon>
        <taxon>Epstein-Barr virus (strain GD1)</taxon>
    </lineage>
</organism>
<protein>
    <recommendedName>
        <fullName>Uncharacterized protein EC-RF4</fullName>
    </recommendedName>
</protein>
<feature type="chain" id="PRO_0000116272" description="Uncharacterized protein EC-RF4">
    <location>
        <begin position="1"/>
        <end position="289"/>
    </location>
</feature>
<reference key="1">
    <citation type="journal article" date="1983" name="Mol. Biol. Med.">
        <title>Sequence analysis of the 17,166 base-pair EcoRI fragment C of B95-8 Epstein-Barr virus.</title>
        <authorList>
            <person name="Bankier A.T."/>
            <person name="Deininger P.L."/>
            <person name="Farrell P.J."/>
            <person name="Barrell B.G."/>
        </authorList>
    </citation>
    <scope>NUCLEOTIDE SEQUENCE [GENOMIC DNA]</scope>
</reference>
<reference key="2">
    <citation type="journal article" date="1984" name="Nature">
        <title>DNA sequence and expression of the B95-8 Epstein-Barr virus genome.</title>
        <authorList>
            <person name="Baer R."/>
            <person name="Bankier A.T."/>
            <person name="Biggin M.D."/>
            <person name="Deininger P.L."/>
            <person name="Farrell P.J."/>
            <person name="Gibson T.J."/>
            <person name="Hatfull G."/>
            <person name="Hudson G.S."/>
            <person name="Satchwell S.C."/>
            <person name="Seguin C."/>
            <person name="Tuffnell P.S."/>
            <person name="Barrell B.G."/>
        </authorList>
    </citation>
    <scope>NUCLEOTIDE SEQUENCE [LARGE SCALE GENOMIC DNA]</scope>
</reference>
<reference key="3">
    <citation type="journal article" date="2003" name="Virology">
        <title>Updated Epstein-Barr virus (EBV) DNA sequence and analysis of a promoter for the BART (CST, BARF0) RNAs of EBV.</title>
        <authorList>
            <person name="de Jesus O."/>
            <person name="Smith P.R."/>
            <person name="Spender L.C."/>
            <person name="Elgueta Karstegl C."/>
            <person name="Niller H.H."/>
            <person name="Huang D."/>
            <person name="Farrell P.J."/>
        </authorList>
    </citation>
    <scope>GENOME REANNOTATION</scope>
</reference>
<name>YEC4_EBVB9</name>
<accession>P03235</accession>
<sequence length="289" mass="29810">MGSPDLADAPSPNFAQRGWVDAVDVPGSVQNVGPVKVGHVVAGHNLHAEVSDELEEGVEHVQLRWELVDLNPLYVFAGAQRQQDAPIAPGLLPCRPEDAGYLQDQVSLVGGRGEALLPQTLDIEGQGLVGGPGAVFTPDREVAHLTVVLELGVRVPVLEAGDGAAAAVPAKGDKVIVQDKAARGIHVGLKDPTPVLVLQPRGHVTHTVGMGEGDLVVVAGMVAVAHNGTARDLLHRDPAGGPAVEGAGLEGAEDCKLHVQTLRRAGVEVGLLPKHVHTHAGPIGLAPAQ</sequence>